<name>Y782_TREPA</name>
<keyword id="KW-1185">Reference proteome</keyword>
<keyword id="KW-0732">Signal</keyword>
<gene>
    <name type="ordered locus">TP_0782</name>
</gene>
<evidence type="ECO:0000255" key="1"/>
<protein>
    <recommendedName>
        <fullName>Uncharacterized protein TP_0782</fullName>
    </recommendedName>
</protein>
<accession>O83761</accession>
<dbReference type="EMBL" id="AE000520">
    <property type="protein sequence ID" value="AAC65752.1"/>
    <property type="molecule type" value="Genomic_DNA"/>
</dbReference>
<dbReference type="PIR" id="G71282">
    <property type="entry name" value="G71282"/>
</dbReference>
<dbReference type="RefSeq" id="WP_010882227.1">
    <property type="nucleotide sequence ID" value="NC_000919.1"/>
</dbReference>
<dbReference type="SMR" id="O83761"/>
<dbReference type="IntAct" id="O83761">
    <property type="interactions" value="9"/>
</dbReference>
<dbReference type="STRING" id="243276.TP_0782"/>
<dbReference type="EnsemblBacteria" id="AAC65752">
    <property type="protein sequence ID" value="AAC65752"/>
    <property type="gene ID" value="TP_0782"/>
</dbReference>
<dbReference type="KEGG" id="tpa:TP_0782"/>
<dbReference type="HOGENOM" id="CLU_1767241_0_0_12"/>
<dbReference type="OrthoDB" id="368271at2"/>
<dbReference type="Proteomes" id="UP000000811">
    <property type="component" value="Chromosome"/>
</dbReference>
<dbReference type="Gene3D" id="2.70.70.10">
    <property type="entry name" value="Glucose Permease (Domain IIA)"/>
    <property type="match status" value="1"/>
</dbReference>
<dbReference type="InterPro" id="IPR011055">
    <property type="entry name" value="Dup_hybrid_motif"/>
</dbReference>
<dbReference type="SUPFAM" id="SSF51261">
    <property type="entry name" value="Duplicated hybrid motif"/>
    <property type="match status" value="1"/>
</dbReference>
<sequence>MRTIFVGVLLLAIMGEGRLCALEWPVDKPKFLSLFGQSVGAGLLQQGLIFDGADSAGERGYAVRTAGYGRCVMRLQKHRRARVFPGALGNALIFAHEDGLQTVYANLREAKNAQDFGSTAEAESGVTVGYAGSSAWAPPNSFVFPGD</sequence>
<feature type="signal peptide" evidence="1">
    <location>
        <begin position="1"/>
        <end position="21"/>
    </location>
</feature>
<feature type="chain" id="PRO_0000014260" description="Uncharacterized protein TP_0782">
    <location>
        <begin position="22"/>
        <end position="147"/>
    </location>
</feature>
<proteinExistence type="inferred from homology"/>
<reference key="1">
    <citation type="journal article" date="1998" name="Science">
        <title>Complete genome sequence of Treponema pallidum, the syphilis spirochete.</title>
        <authorList>
            <person name="Fraser C.M."/>
            <person name="Norris S.J."/>
            <person name="Weinstock G.M."/>
            <person name="White O."/>
            <person name="Sutton G.G."/>
            <person name="Dodson R.J."/>
            <person name="Gwinn M.L."/>
            <person name="Hickey E.K."/>
            <person name="Clayton R.A."/>
            <person name="Ketchum K.A."/>
            <person name="Sodergren E."/>
            <person name="Hardham J.M."/>
            <person name="McLeod M.P."/>
            <person name="Salzberg S.L."/>
            <person name="Peterson J.D."/>
            <person name="Khalak H.G."/>
            <person name="Richardson D.L."/>
            <person name="Howell J.K."/>
            <person name="Chidambaram M."/>
            <person name="Utterback T.R."/>
            <person name="McDonald L.A."/>
            <person name="Artiach P."/>
            <person name="Bowman C."/>
            <person name="Cotton M.D."/>
            <person name="Fujii C."/>
            <person name="Garland S.A."/>
            <person name="Hatch B."/>
            <person name="Horst K."/>
            <person name="Roberts K.M."/>
            <person name="Sandusky M."/>
            <person name="Weidman J.F."/>
            <person name="Smith H.O."/>
            <person name="Venter J.C."/>
        </authorList>
    </citation>
    <scope>NUCLEOTIDE SEQUENCE [LARGE SCALE GENOMIC DNA]</scope>
    <source>
        <strain>Nichols</strain>
    </source>
</reference>
<organism>
    <name type="scientific">Treponema pallidum (strain Nichols)</name>
    <dbReference type="NCBI Taxonomy" id="243276"/>
    <lineage>
        <taxon>Bacteria</taxon>
        <taxon>Pseudomonadati</taxon>
        <taxon>Spirochaetota</taxon>
        <taxon>Spirochaetia</taxon>
        <taxon>Spirochaetales</taxon>
        <taxon>Treponemataceae</taxon>
        <taxon>Treponema</taxon>
    </lineage>
</organism>